<evidence type="ECO:0000250" key="1"/>
<evidence type="ECO:0000250" key="2">
    <source>
        <dbReference type="UniProtKB" id="P14324"/>
    </source>
</evidence>
<evidence type="ECO:0000250" key="3">
    <source>
        <dbReference type="UniProtKB" id="Q12051"/>
    </source>
</evidence>
<evidence type="ECO:0000269" key="4">
    <source>
    </source>
</evidence>
<evidence type="ECO:0000303" key="5">
    <source>
    </source>
</evidence>
<evidence type="ECO:0000305" key="6"/>
<evidence type="ECO:0007829" key="7">
    <source>
        <dbReference type="PDB" id="5ZE6"/>
    </source>
</evidence>
<sequence length="323" mass="35217">MNLEKINELTAQDMAGVNAAILEQLNSDVQLINQLGYYIVSGGGKRIRPMIAVLAARAVGYEGNAHVTIAALIEFIHTATLLHDDVVDESDMRRGKATANAAFGNAASVLVGDFIYTRAFQMMTSLGSLKVLEVMSEAVNVIAEGEVLQLMNVNDPDITEENYMRVIYSKTARLFEAAAQCSGILAGCTPEEEKGLQDYGRYLGTAFQLIDDLLDYNADGEQLGKNVGDDLNEGKPTLPLLHAMHHGTPEQAQMIRTAIEQGNGRHLLEPVLEAMNACGSLEWTRQRAEEEADKAIAALQVLPDTPWREALIGLAHIAVQRDR</sequence>
<feature type="chain" id="PRO_0000124005" description="Octaprenyl diphosphate synthase">
    <location>
        <begin position="1"/>
        <end position="323"/>
    </location>
</feature>
<feature type="binding site" evidence="2">
    <location>
        <position position="45"/>
    </location>
    <ligand>
        <name>isopentenyl diphosphate</name>
        <dbReference type="ChEBI" id="CHEBI:128769"/>
    </ligand>
</feature>
<feature type="binding site" evidence="2">
    <location>
        <position position="48"/>
    </location>
    <ligand>
        <name>isopentenyl diphosphate</name>
        <dbReference type="ChEBI" id="CHEBI:128769"/>
    </ligand>
</feature>
<feature type="binding site" evidence="3">
    <location>
        <position position="77"/>
    </location>
    <ligand>
        <name>isopentenyl diphosphate</name>
        <dbReference type="ChEBI" id="CHEBI:128769"/>
    </ligand>
</feature>
<feature type="binding site" evidence="2">
    <location>
        <position position="84"/>
    </location>
    <ligand>
        <name>Mg(2+)</name>
        <dbReference type="ChEBI" id="CHEBI:18420"/>
        <label>1</label>
    </ligand>
</feature>
<feature type="binding site" evidence="2">
    <location>
        <position position="84"/>
    </location>
    <ligand>
        <name>Mg(2+)</name>
        <dbReference type="ChEBI" id="CHEBI:18420"/>
        <label>2</label>
    </ligand>
</feature>
<feature type="binding site" evidence="2">
    <location>
        <position position="88"/>
    </location>
    <ligand>
        <name>Mg(2+)</name>
        <dbReference type="ChEBI" id="CHEBI:18420"/>
        <label>1</label>
    </ligand>
</feature>
<feature type="binding site" evidence="2">
    <location>
        <position position="88"/>
    </location>
    <ligand>
        <name>Mg(2+)</name>
        <dbReference type="ChEBI" id="CHEBI:18420"/>
        <label>2</label>
    </ligand>
</feature>
<feature type="binding site" evidence="1">
    <location>
        <position position="93"/>
    </location>
    <ligand>
        <name>an all-trans-polyprenyl diphosphate</name>
        <dbReference type="ChEBI" id="CHEBI:58914"/>
    </ligand>
</feature>
<feature type="binding site" evidence="2">
    <location>
        <position position="94"/>
    </location>
    <ligand>
        <name>isopentenyl diphosphate</name>
        <dbReference type="ChEBI" id="CHEBI:128769"/>
    </ligand>
</feature>
<feature type="binding site" evidence="1">
    <location>
        <position position="170"/>
    </location>
    <ligand>
        <name>an all-trans-polyprenyl diphosphate</name>
        <dbReference type="ChEBI" id="CHEBI:58914"/>
    </ligand>
</feature>
<feature type="binding site" evidence="1">
    <location>
        <position position="171"/>
    </location>
    <ligand>
        <name>an all-trans-polyprenyl diphosphate</name>
        <dbReference type="ChEBI" id="CHEBI:58914"/>
    </ligand>
</feature>
<feature type="binding site" evidence="1">
    <location>
        <position position="208"/>
    </location>
    <ligand>
        <name>an all-trans-polyprenyl diphosphate</name>
        <dbReference type="ChEBI" id="CHEBI:58914"/>
    </ligand>
</feature>
<feature type="helix" evidence="7">
    <location>
        <begin position="3"/>
        <end position="24"/>
    </location>
</feature>
<feature type="helix" evidence="7">
    <location>
        <begin position="30"/>
        <end position="40"/>
    </location>
</feature>
<feature type="helix" evidence="7">
    <location>
        <begin position="47"/>
        <end position="58"/>
    </location>
</feature>
<feature type="helix" evidence="7">
    <location>
        <begin position="65"/>
        <end position="87"/>
    </location>
</feature>
<feature type="strand" evidence="7">
    <location>
        <begin position="91"/>
        <end position="93"/>
    </location>
</feature>
<feature type="helix" evidence="7">
    <location>
        <begin position="99"/>
        <end position="103"/>
    </location>
</feature>
<feature type="helix" evidence="7">
    <location>
        <begin position="105"/>
        <end position="124"/>
    </location>
</feature>
<feature type="turn" evidence="7">
    <location>
        <begin position="125"/>
        <end position="127"/>
    </location>
</feature>
<feature type="helix" evidence="7">
    <location>
        <begin position="129"/>
        <end position="151"/>
    </location>
</feature>
<feature type="helix" evidence="7">
    <location>
        <begin position="160"/>
        <end position="169"/>
    </location>
</feature>
<feature type="turn" evidence="7">
    <location>
        <begin position="170"/>
        <end position="172"/>
    </location>
</feature>
<feature type="helix" evidence="7">
    <location>
        <begin position="173"/>
        <end position="185"/>
    </location>
</feature>
<feature type="helix" evidence="7">
    <location>
        <begin position="190"/>
        <end position="214"/>
    </location>
</feature>
<feature type="helix" evidence="7">
    <location>
        <begin position="229"/>
        <end position="232"/>
    </location>
</feature>
<feature type="helix" evidence="7">
    <location>
        <begin position="238"/>
        <end position="246"/>
    </location>
</feature>
<feature type="helix" evidence="7">
    <location>
        <begin position="249"/>
        <end position="261"/>
    </location>
</feature>
<feature type="helix" evidence="7">
    <location>
        <begin position="268"/>
        <end position="278"/>
    </location>
</feature>
<feature type="helix" evidence="7">
    <location>
        <begin position="280"/>
        <end position="298"/>
    </location>
</feature>
<feature type="helix" evidence="7">
    <location>
        <begin position="299"/>
        <end position="301"/>
    </location>
</feature>
<feature type="helix" evidence="7">
    <location>
        <begin position="306"/>
        <end position="318"/>
    </location>
</feature>
<reference key="1">
    <citation type="journal article" date="1993" name="DNA Seq.">
        <title>Cloning and nucleotide sequencing of the genes, rpIU and rpmA, for ribosomal proteins L21 and L27 of Escherichia coli.</title>
        <authorList>
            <person name="Jeong J.H."/>
            <person name="Kitakawa M.S."/>
            <person name="Isono S."/>
            <person name="Isono K."/>
        </authorList>
    </citation>
    <scope>NUCLEOTIDE SEQUENCE [GENOMIC DNA]</scope>
    <source>
        <strain>K12 / W3110 / ATCC 27325 / DSM 5911</strain>
    </source>
</reference>
<reference key="2">
    <citation type="journal article" date="1997" name="Science">
        <title>The complete genome sequence of Escherichia coli K-12.</title>
        <authorList>
            <person name="Blattner F.R."/>
            <person name="Plunkett G. III"/>
            <person name="Bloch C.A."/>
            <person name="Perna N.T."/>
            <person name="Burland V."/>
            <person name="Riley M."/>
            <person name="Collado-Vides J."/>
            <person name="Glasner J.D."/>
            <person name="Rode C.K."/>
            <person name="Mayhew G.F."/>
            <person name="Gregor J."/>
            <person name="Davis N.W."/>
            <person name="Kirkpatrick H.A."/>
            <person name="Goeden M.A."/>
            <person name="Rose D.J."/>
            <person name="Mau B."/>
            <person name="Shao Y."/>
        </authorList>
    </citation>
    <scope>NUCLEOTIDE SEQUENCE [LARGE SCALE GENOMIC DNA]</scope>
    <source>
        <strain>K12 / MG1655 / ATCC 47076</strain>
    </source>
</reference>
<reference key="3">
    <citation type="journal article" date="2006" name="Mol. Syst. Biol.">
        <title>Highly accurate genome sequences of Escherichia coli K-12 strains MG1655 and W3110.</title>
        <authorList>
            <person name="Hayashi K."/>
            <person name="Morooka N."/>
            <person name="Yamamoto Y."/>
            <person name="Fujita K."/>
            <person name="Isono K."/>
            <person name="Choi S."/>
            <person name="Ohtsubo E."/>
            <person name="Baba T."/>
            <person name="Wanner B.L."/>
            <person name="Mori H."/>
            <person name="Horiuchi T."/>
        </authorList>
    </citation>
    <scope>NUCLEOTIDE SEQUENCE [LARGE SCALE GENOMIC DNA]</scope>
    <source>
        <strain>K12 / W3110 / ATCC 27325 / DSM 5911</strain>
    </source>
</reference>
<reference key="4">
    <citation type="journal article" date="1989" name="J. Bacteriol.">
        <title>Cloning and sequencing of an Escherichia coli gene, nlp, highly homologous to the ner genes of bacteriophages Mu and D108.</title>
        <authorList>
            <person name="Choi Y.-L."/>
            <person name="Nishida T."/>
            <person name="Kawamukai M."/>
            <person name="Utsumi R."/>
            <person name="Sakai H."/>
            <person name="Komano T."/>
        </authorList>
    </citation>
    <scope>NUCLEOTIDE SEQUENCE [GENOMIC DNA] OF 196-323</scope>
</reference>
<reference key="5">
    <citation type="journal article" date="1994" name="Biochem. Biophys. Res. Commun.">
        <title>The identification of Escherichia coli ispB (cel) gene encoding the octaprenyl diphosphate synthase.</title>
        <authorList>
            <person name="Asai K."/>
            <person name="Fujisaki S."/>
            <person name="Nishimura Y."/>
            <person name="Nishino T."/>
            <person name="Okada K."/>
            <person name="Nakagawa T."/>
            <person name="Kawamukai M."/>
            <person name="Matsuda H."/>
        </authorList>
    </citation>
    <scope>FUNCTION</scope>
    <scope>CATALYTIC ACTIVITY</scope>
    <source>
        <strain>K12 / JM109 / ATCC 53323</strain>
    </source>
</reference>
<organism>
    <name type="scientific">Escherichia coli (strain K12)</name>
    <dbReference type="NCBI Taxonomy" id="83333"/>
    <lineage>
        <taxon>Bacteria</taxon>
        <taxon>Pseudomonadati</taxon>
        <taxon>Pseudomonadota</taxon>
        <taxon>Gammaproteobacteria</taxon>
        <taxon>Enterobacterales</taxon>
        <taxon>Enterobacteriaceae</taxon>
        <taxon>Escherichia</taxon>
    </lineage>
</organism>
<accession>P0AD57</accession>
<accession>P19641</accession>
<accession>Q2M925</accession>
<name>ISPB_ECOLI</name>
<comment type="function">
    <text evidence="4">Supplies octaprenyl diphosphate, the precursor for the side chain of the isoprenoid quinones ubiquinone and menaquinone.</text>
</comment>
<comment type="catalytic activity">
    <reaction evidence="4">
        <text>5 isopentenyl diphosphate + (2E,6E)-farnesyl diphosphate = all-trans-octaprenyl diphosphate + 5 diphosphate</text>
        <dbReference type="Rhea" id="RHEA:27798"/>
        <dbReference type="ChEBI" id="CHEBI:33019"/>
        <dbReference type="ChEBI" id="CHEBI:57711"/>
        <dbReference type="ChEBI" id="CHEBI:128769"/>
        <dbReference type="ChEBI" id="CHEBI:175763"/>
        <dbReference type="EC" id="2.5.1.90"/>
    </reaction>
</comment>
<comment type="cofactor">
    <cofactor evidence="1">
        <name>Mg(2+)</name>
        <dbReference type="ChEBI" id="CHEBI:18420"/>
    </cofactor>
    <text evidence="1">Binds 2 Mg(2+) ions per subunit.</text>
</comment>
<comment type="interaction">
    <interactant intactId="EBI-1131851">
        <id>P0AD57</id>
    </interactant>
    <interactant intactId="EBI-1131851">
        <id>P0AD57</id>
        <label>ispB</label>
    </interactant>
    <organismsDiffer>false</organismsDiffer>
    <experiments>2</experiments>
</comment>
<comment type="interaction">
    <interactant intactId="EBI-1131851">
        <id>P0AD57</id>
    </interactant>
    <interactant intactId="EBI-7701234">
        <id>O13851</id>
        <label>dlp1</label>
    </interactant>
    <organismsDiffer>true</organismsDiffer>
    <experiments>2</experiments>
</comment>
<comment type="interaction">
    <interactant intactId="EBI-1131851">
        <id>P0AD57</id>
    </interactant>
    <interactant intactId="EBI-7701164">
        <id>O43091</id>
        <label>dps1</label>
    </interactant>
    <organismsDiffer>true</organismsDiffer>
    <experiments>2</experiments>
</comment>
<comment type="similarity">
    <text evidence="6">Belongs to the FPP/GGPP synthase family.</text>
</comment>
<dbReference type="EC" id="2.5.1.90" evidence="4"/>
<dbReference type="EMBL" id="D13267">
    <property type="status" value="NOT_ANNOTATED_CDS"/>
    <property type="molecule type" value="Genomic_DNA"/>
</dbReference>
<dbReference type="EMBL" id="U18997">
    <property type="protein sequence ID" value="AAA57988.1"/>
    <property type="molecule type" value="Genomic_DNA"/>
</dbReference>
<dbReference type="EMBL" id="U00096">
    <property type="protein sequence ID" value="AAC76219.1"/>
    <property type="molecule type" value="Genomic_DNA"/>
</dbReference>
<dbReference type="EMBL" id="AP009048">
    <property type="protein sequence ID" value="BAE77231.1"/>
    <property type="molecule type" value="Genomic_DNA"/>
</dbReference>
<dbReference type="EMBL" id="X68873">
    <property type="protein sequence ID" value="CAA48735.1"/>
    <property type="molecule type" value="Genomic_DNA"/>
</dbReference>
<dbReference type="PIR" id="E65109">
    <property type="entry name" value="E65109"/>
</dbReference>
<dbReference type="RefSeq" id="NP_417654.1">
    <property type="nucleotide sequence ID" value="NC_000913.3"/>
</dbReference>
<dbReference type="RefSeq" id="WP_001047336.1">
    <property type="nucleotide sequence ID" value="NZ_STEB01000012.1"/>
</dbReference>
<dbReference type="PDB" id="5ZE6">
    <property type="method" value="X-ray"/>
    <property type="resolution" value="2.50 A"/>
    <property type="chains" value="A/B/C/D=1-323"/>
</dbReference>
<dbReference type="PDB" id="5ZLF">
    <property type="method" value="X-ray"/>
    <property type="resolution" value="2.85 A"/>
    <property type="chains" value="A/B/C/D=1-323"/>
</dbReference>
<dbReference type="PDBsum" id="5ZE6"/>
<dbReference type="PDBsum" id="5ZLF"/>
<dbReference type="SMR" id="P0AD57"/>
<dbReference type="BioGRID" id="4261111">
    <property type="interactions" value="139"/>
</dbReference>
<dbReference type="BioGRID" id="851687">
    <property type="interactions" value="3"/>
</dbReference>
<dbReference type="FunCoup" id="P0AD57">
    <property type="interactions" value="654"/>
</dbReference>
<dbReference type="IntAct" id="P0AD57">
    <property type="interactions" value="5"/>
</dbReference>
<dbReference type="MINT" id="P0AD57"/>
<dbReference type="STRING" id="511145.b3187"/>
<dbReference type="ChEMBL" id="CHEMBL3309021"/>
<dbReference type="jPOST" id="P0AD57"/>
<dbReference type="PaxDb" id="511145-b3187"/>
<dbReference type="DNASU" id="947364"/>
<dbReference type="EnsemblBacteria" id="AAC76219">
    <property type="protein sequence ID" value="AAC76219"/>
    <property type="gene ID" value="b3187"/>
</dbReference>
<dbReference type="GeneID" id="93778794"/>
<dbReference type="GeneID" id="947364"/>
<dbReference type="KEGG" id="ecj:JW3154"/>
<dbReference type="KEGG" id="eco:b3187"/>
<dbReference type="KEGG" id="ecoc:C3026_17350"/>
<dbReference type="PATRIC" id="fig|1411691.4.peg.3544"/>
<dbReference type="EchoBASE" id="EB0017"/>
<dbReference type="eggNOG" id="COG0142">
    <property type="taxonomic scope" value="Bacteria"/>
</dbReference>
<dbReference type="HOGENOM" id="CLU_014015_2_0_6"/>
<dbReference type="InParanoid" id="P0AD57"/>
<dbReference type="OMA" id="GKQMRPM"/>
<dbReference type="OrthoDB" id="9805316at2"/>
<dbReference type="PhylomeDB" id="P0AD57"/>
<dbReference type="BioCyc" id="EcoCyc:OPPSYN-MONOMER"/>
<dbReference type="BioCyc" id="MetaCyc:OPPSYN-MONOMER"/>
<dbReference type="BRENDA" id="2.5.1.90">
    <property type="organism ID" value="2026"/>
</dbReference>
<dbReference type="SABIO-RK" id="P0AD57"/>
<dbReference type="PRO" id="PR:P0AD57"/>
<dbReference type="Proteomes" id="UP000000625">
    <property type="component" value="Chromosome"/>
</dbReference>
<dbReference type="GO" id="GO:0005829">
    <property type="term" value="C:cytosol"/>
    <property type="evidence" value="ECO:0000314"/>
    <property type="project" value="EcoCyc"/>
</dbReference>
<dbReference type="GO" id="GO:0106350">
    <property type="term" value="F:all-trans-octaprenyl-diphosphate synthase activity"/>
    <property type="evidence" value="ECO:0007669"/>
    <property type="project" value="UniProtKB-EC"/>
</dbReference>
<dbReference type="GO" id="GO:0042802">
    <property type="term" value="F:identical protein binding"/>
    <property type="evidence" value="ECO:0000353"/>
    <property type="project" value="IntAct"/>
</dbReference>
<dbReference type="GO" id="GO:0046872">
    <property type="term" value="F:metal ion binding"/>
    <property type="evidence" value="ECO:0007669"/>
    <property type="project" value="UniProtKB-KW"/>
</dbReference>
<dbReference type="GO" id="GO:0004659">
    <property type="term" value="F:prenyltransferase activity"/>
    <property type="evidence" value="ECO:0000314"/>
    <property type="project" value="EcoCyc"/>
</dbReference>
<dbReference type="GO" id="GO:0042803">
    <property type="term" value="F:protein homodimerization activity"/>
    <property type="evidence" value="ECO:0000314"/>
    <property type="project" value="EcoCyc"/>
</dbReference>
<dbReference type="GO" id="GO:0008299">
    <property type="term" value="P:isoprenoid biosynthetic process"/>
    <property type="evidence" value="ECO:0000318"/>
    <property type="project" value="GO_Central"/>
</dbReference>
<dbReference type="GO" id="GO:0016094">
    <property type="term" value="P:polyprenol biosynthetic process"/>
    <property type="evidence" value="ECO:0000315"/>
    <property type="project" value="EcoCyc"/>
</dbReference>
<dbReference type="GO" id="GO:0006744">
    <property type="term" value="P:ubiquinone biosynthetic process"/>
    <property type="evidence" value="ECO:0000315"/>
    <property type="project" value="EcoCyc"/>
</dbReference>
<dbReference type="CDD" id="cd00685">
    <property type="entry name" value="Trans_IPPS_HT"/>
    <property type="match status" value="1"/>
</dbReference>
<dbReference type="FunFam" id="1.10.600.10:FF:000002">
    <property type="entry name" value="Octaprenyl diphosphate synthase"/>
    <property type="match status" value="1"/>
</dbReference>
<dbReference type="Gene3D" id="1.10.600.10">
    <property type="entry name" value="Farnesyl Diphosphate Synthase"/>
    <property type="match status" value="1"/>
</dbReference>
<dbReference type="InterPro" id="IPR008949">
    <property type="entry name" value="Isoprenoid_synthase_dom_sf"/>
</dbReference>
<dbReference type="InterPro" id="IPR000092">
    <property type="entry name" value="Polyprenyl_synt"/>
</dbReference>
<dbReference type="InterPro" id="IPR033749">
    <property type="entry name" value="Polyprenyl_synt_CS"/>
</dbReference>
<dbReference type="NCBIfam" id="NF008140">
    <property type="entry name" value="PRK10888.1"/>
    <property type="match status" value="1"/>
</dbReference>
<dbReference type="PANTHER" id="PTHR12001:SF69">
    <property type="entry name" value="ALL TRANS-POLYPRENYL-DIPHOSPHATE SYNTHASE PDSS1"/>
    <property type="match status" value="1"/>
</dbReference>
<dbReference type="PANTHER" id="PTHR12001">
    <property type="entry name" value="GERANYLGERANYL PYROPHOSPHATE SYNTHASE"/>
    <property type="match status" value="1"/>
</dbReference>
<dbReference type="Pfam" id="PF00348">
    <property type="entry name" value="polyprenyl_synt"/>
    <property type="match status" value="1"/>
</dbReference>
<dbReference type="SFLD" id="SFLDS00005">
    <property type="entry name" value="Isoprenoid_Synthase_Type_I"/>
    <property type="match status" value="1"/>
</dbReference>
<dbReference type="SUPFAM" id="SSF48576">
    <property type="entry name" value="Terpenoid synthases"/>
    <property type="match status" value="1"/>
</dbReference>
<dbReference type="PROSITE" id="PS00723">
    <property type="entry name" value="POLYPRENYL_SYNTHASE_1"/>
    <property type="match status" value="1"/>
</dbReference>
<dbReference type="PROSITE" id="PS00444">
    <property type="entry name" value="POLYPRENYL_SYNTHASE_2"/>
    <property type="match status" value="1"/>
</dbReference>
<gene>
    <name type="primary">ispB</name>
    <name type="synonym">cel</name>
    <name type="synonym">yhbD</name>
    <name type="ordered locus">b3187</name>
    <name type="ordered locus">JW3154</name>
</gene>
<protein>
    <recommendedName>
        <fullName evidence="5">Octaprenyl diphosphate synthase</fullName>
        <ecNumber evidence="4">2.5.1.90</ecNumber>
    </recommendedName>
    <alternativeName>
        <fullName>All-trans-octaprenyl-diphosphate synthase</fullName>
    </alternativeName>
    <alternativeName>
        <fullName>Octaprenyl pyrophosphate synthase</fullName>
        <shortName>OPP synthase</shortName>
    </alternativeName>
</protein>
<keyword id="KW-0002">3D-structure</keyword>
<keyword id="KW-0414">Isoprene biosynthesis</keyword>
<keyword id="KW-0460">Magnesium</keyword>
<keyword id="KW-0479">Metal-binding</keyword>
<keyword id="KW-1185">Reference proteome</keyword>
<keyword id="KW-0808">Transferase</keyword>
<proteinExistence type="evidence at protein level"/>